<protein>
    <recommendedName>
        <fullName>UPF0719 transmembrane protein aq_1349</fullName>
    </recommendedName>
</protein>
<dbReference type="EMBL" id="AE000657">
    <property type="protein sequence ID" value="AAC07335.1"/>
    <property type="molecule type" value="Genomic_DNA"/>
</dbReference>
<dbReference type="PIR" id="A70417">
    <property type="entry name" value="A70417"/>
</dbReference>
<dbReference type="RefSeq" id="NP_213928.1">
    <property type="nucleotide sequence ID" value="NC_000918.1"/>
</dbReference>
<dbReference type="RefSeq" id="WP_010880866.1">
    <property type="nucleotide sequence ID" value="NC_000918.1"/>
</dbReference>
<dbReference type="STRING" id="224324.aq_1349"/>
<dbReference type="EnsemblBacteria" id="AAC07335">
    <property type="protein sequence ID" value="AAC07335"/>
    <property type="gene ID" value="aq_1349"/>
</dbReference>
<dbReference type="KEGG" id="aae:aq_1349"/>
<dbReference type="eggNOG" id="COG3766">
    <property type="taxonomic scope" value="Bacteria"/>
</dbReference>
<dbReference type="HOGENOM" id="CLU_1036841_0_0_0"/>
<dbReference type="InParanoid" id="O67364"/>
<dbReference type="OrthoDB" id="5416313at2"/>
<dbReference type="Proteomes" id="UP000000798">
    <property type="component" value="Chromosome"/>
</dbReference>
<dbReference type="GO" id="GO:0005886">
    <property type="term" value="C:plasma membrane"/>
    <property type="evidence" value="ECO:0007669"/>
    <property type="project" value="UniProtKB-SubCell"/>
</dbReference>
<dbReference type="InterPro" id="IPR007140">
    <property type="entry name" value="DUF350"/>
</dbReference>
<dbReference type="PANTHER" id="PTHR40043">
    <property type="entry name" value="UPF0719 INNER MEMBRANE PROTEIN YJFL"/>
    <property type="match status" value="1"/>
</dbReference>
<dbReference type="PANTHER" id="PTHR40043:SF1">
    <property type="entry name" value="UPF0719 INNER MEMBRANE PROTEIN YJFL"/>
    <property type="match status" value="1"/>
</dbReference>
<dbReference type="Pfam" id="PF03994">
    <property type="entry name" value="DUF350"/>
    <property type="match status" value="2"/>
</dbReference>
<name>Y1349_AQUAE</name>
<evidence type="ECO:0000255" key="1"/>
<evidence type="ECO:0000305" key="2"/>
<feature type="chain" id="PRO_0000186922" description="UPF0719 transmembrane protein aq_1349">
    <location>
        <begin position="1"/>
        <end position="268"/>
    </location>
</feature>
<feature type="transmembrane region" description="Helical" evidence="1">
    <location>
        <begin position="5"/>
        <end position="24"/>
    </location>
</feature>
<feature type="transmembrane region" description="Helical" evidence="1">
    <location>
        <begin position="37"/>
        <end position="59"/>
    </location>
</feature>
<feature type="transmembrane region" description="Helical" evidence="1">
    <location>
        <begin position="69"/>
        <end position="91"/>
    </location>
</feature>
<feature type="transmembrane region" description="Helical" evidence="1">
    <location>
        <begin position="104"/>
        <end position="126"/>
    </location>
</feature>
<feature type="transmembrane region" description="Helical" evidence="1">
    <location>
        <begin position="130"/>
        <end position="152"/>
    </location>
</feature>
<feature type="transmembrane region" description="Helical" evidence="1">
    <location>
        <begin position="173"/>
        <end position="195"/>
    </location>
</feature>
<feature type="transmembrane region" description="Helical" evidence="1">
    <location>
        <begin position="210"/>
        <end position="232"/>
    </location>
</feature>
<feature type="transmembrane region" description="Helical" evidence="1">
    <location>
        <begin position="245"/>
        <end position="267"/>
    </location>
</feature>
<comment type="subcellular location">
    <subcellularLocation>
        <location evidence="2">Cell membrane</location>
        <topology evidence="2">Multi-pass membrane protein</topology>
    </subcellularLocation>
</comment>
<comment type="similarity">
    <text evidence="2">Belongs to the UPF0719 family.</text>
</comment>
<organism>
    <name type="scientific">Aquifex aeolicus (strain VF5)</name>
    <dbReference type="NCBI Taxonomy" id="224324"/>
    <lineage>
        <taxon>Bacteria</taxon>
        <taxon>Pseudomonadati</taxon>
        <taxon>Aquificota</taxon>
        <taxon>Aquificia</taxon>
        <taxon>Aquificales</taxon>
        <taxon>Aquificaceae</taxon>
        <taxon>Aquifex</taxon>
    </lineage>
</organism>
<proteinExistence type="inferred from homology"/>
<reference key="1">
    <citation type="journal article" date="1998" name="Nature">
        <title>The complete genome of the hyperthermophilic bacterium Aquifex aeolicus.</title>
        <authorList>
            <person name="Deckert G."/>
            <person name="Warren P.V."/>
            <person name="Gaasterland T."/>
            <person name="Young W.G."/>
            <person name="Lenox A.L."/>
            <person name="Graham D.E."/>
            <person name="Overbeek R."/>
            <person name="Snead M.A."/>
            <person name="Keller M."/>
            <person name="Aujay M."/>
            <person name="Huber R."/>
            <person name="Feldman R.A."/>
            <person name="Short J.M."/>
            <person name="Olsen G.J."/>
            <person name="Swanson R.V."/>
        </authorList>
    </citation>
    <scope>NUCLEOTIDE SEQUENCE [LARGE SCALE GENOMIC DNA]</scope>
    <source>
        <strain>VF5</strain>
    </source>
</reference>
<gene>
    <name type="ordered locus">aq_1349</name>
</gene>
<keyword id="KW-1003">Cell membrane</keyword>
<keyword id="KW-0472">Membrane</keyword>
<keyword id="KW-1185">Reference proteome</keyword>
<keyword id="KW-0812">Transmembrane</keyword>
<keyword id="KW-1133">Transmembrane helix</keyword>
<sequence>MSGFLIALFWVIFSKYVFDVLFFREAKIEREIFGNKNLALSLSYAGYFLGLAFSFYSVYFYESLFREVLYLIFVSFTLLLGVYIFDLIFLRKIDLKEEILRGNAGAGITQGIYFLSLGILISASFWRKESFILSVIYSLIYLSLGMVMLFISTLLMSRLLKLNFEEEVKKENFSASLVLGSITLGVSVVLYGAISGEFMGSLIFDLFSTVLYFVVSQVLMVIFYVVVEFLLFRKVILSSEVYENNLSASLILSATFIASAFITLAVMG</sequence>
<accession>O67364</accession>